<reference key="1">
    <citation type="journal article" date="2011" name="J. Bacteriol.">
        <title>Complete genome sequence and updated annotation of Desulfovibrio alaskensis G20.</title>
        <authorList>
            <person name="Hauser L.J."/>
            <person name="Land M.L."/>
            <person name="Brown S.D."/>
            <person name="Larimer F."/>
            <person name="Keller K.L."/>
            <person name="Rapp-Giles B.J."/>
            <person name="Price M.N."/>
            <person name="Lin M."/>
            <person name="Bruce D.C."/>
            <person name="Detter J.C."/>
            <person name="Tapia R."/>
            <person name="Han C.S."/>
            <person name="Goodwin L.A."/>
            <person name="Cheng J.F."/>
            <person name="Pitluck S."/>
            <person name="Copeland A."/>
            <person name="Lucas S."/>
            <person name="Nolan M."/>
            <person name="Lapidus A.L."/>
            <person name="Palumbo A.V."/>
            <person name="Wall J.D."/>
        </authorList>
    </citation>
    <scope>NUCLEOTIDE SEQUENCE [LARGE SCALE GENOMIC DNA]</scope>
    <source>
        <strain>ATCC BAA-1058 / DSM 17464 / G20</strain>
    </source>
</reference>
<proteinExistence type="inferred from homology"/>
<feature type="chain" id="PRO_1000003949" description="Small ribosomal subunit protein uS2">
    <location>
        <begin position="1"/>
        <end position="260"/>
    </location>
</feature>
<feature type="region of interest" description="Disordered" evidence="2">
    <location>
        <begin position="228"/>
        <end position="260"/>
    </location>
</feature>
<feature type="compositionally biased region" description="Basic and acidic residues" evidence="2">
    <location>
        <begin position="228"/>
        <end position="240"/>
    </location>
</feature>
<feature type="compositionally biased region" description="Low complexity" evidence="2">
    <location>
        <begin position="241"/>
        <end position="260"/>
    </location>
</feature>
<dbReference type="EMBL" id="CP000112">
    <property type="protein sequence ID" value="ABB37934.1"/>
    <property type="molecule type" value="Genomic_DNA"/>
</dbReference>
<dbReference type="RefSeq" id="WP_011367160.1">
    <property type="nucleotide sequence ID" value="NC_007519.1"/>
</dbReference>
<dbReference type="SMR" id="Q313G2"/>
<dbReference type="STRING" id="207559.Dde_1133"/>
<dbReference type="KEGG" id="dde:Dde_1133"/>
<dbReference type="eggNOG" id="COG0052">
    <property type="taxonomic scope" value="Bacteria"/>
</dbReference>
<dbReference type="HOGENOM" id="CLU_040318_2_2_7"/>
<dbReference type="Proteomes" id="UP000002710">
    <property type="component" value="Chromosome"/>
</dbReference>
<dbReference type="GO" id="GO:0022627">
    <property type="term" value="C:cytosolic small ribosomal subunit"/>
    <property type="evidence" value="ECO:0007669"/>
    <property type="project" value="TreeGrafter"/>
</dbReference>
<dbReference type="GO" id="GO:0003735">
    <property type="term" value="F:structural constituent of ribosome"/>
    <property type="evidence" value="ECO:0007669"/>
    <property type="project" value="InterPro"/>
</dbReference>
<dbReference type="GO" id="GO:0006412">
    <property type="term" value="P:translation"/>
    <property type="evidence" value="ECO:0007669"/>
    <property type="project" value="UniProtKB-UniRule"/>
</dbReference>
<dbReference type="CDD" id="cd01425">
    <property type="entry name" value="RPS2"/>
    <property type="match status" value="1"/>
</dbReference>
<dbReference type="FunFam" id="1.10.287.610:FF:000001">
    <property type="entry name" value="30S ribosomal protein S2"/>
    <property type="match status" value="1"/>
</dbReference>
<dbReference type="Gene3D" id="3.40.50.10490">
    <property type="entry name" value="Glucose-6-phosphate isomerase like protein, domain 1"/>
    <property type="match status" value="1"/>
</dbReference>
<dbReference type="Gene3D" id="1.10.287.610">
    <property type="entry name" value="Helix hairpin bin"/>
    <property type="match status" value="1"/>
</dbReference>
<dbReference type="HAMAP" id="MF_00291_B">
    <property type="entry name" value="Ribosomal_uS2_B"/>
    <property type="match status" value="1"/>
</dbReference>
<dbReference type="InterPro" id="IPR001865">
    <property type="entry name" value="Ribosomal_uS2"/>
</dbReference>
<dbReference type="InterPro" id="IPR005706">
    <property type="entry name" value="Ribosomal_uS2_bac/mit/plastid"/>
</dbReference>
<dbReference type="InterPro" id="IPR023591">
    <property type="entry name" value="Ribosomal_uS2_flav_dom_sf"/>
</dbReference>
<dbReference type="NCBIfam" id="TIGR01011">
    <property type="entry name" value="rpsB_bact"/>
    <property type="match status" value="1"/>
</dbReference>
<dbReference type="PANTHER" id="PTHR12534">
    <property type="entry name" value="30S RIBOSOMAL PROTEIN S2 PROKARYOTIC AND ORGANELLAR"/>
    <property type="match status" value="1"/>
</dbReference>
<dbReference type="PANTHER" id="PTHR12534:SF0">
    <property type="entry name" value="SMALL RIBOSOMAL SUBUNIT PROTEIN US2M"/>
    <property type="match status" value="1"/>
</dbReference>
<dbReference type="Pfam" id="PF00318">
    <property type="entry name" value="Ribosomal_S2"/>
    <property type="match status" value="1"/>
</dbReference>
<dbReference type="PRINTS" id="PR00395">
    <property type="entry name" value="RIBOSOMALS2"/>
</dbReference>
<dbReference type="SUPFAM" id="SSF52313">
    <property type="entry name" value="Ribosomal protein S2"/>
    <property type="match status" value="1"/>
</dbReference>
<name>RS2_OLEA2</name>
<evidence type="ECO:0000255" key="1">
    <source>
        <dbReference type="HAMAP-Rule" id="MF_00291"/>
    </source>
</evidence>
<evidence type="ECO:0000256" key="2">
    <source>
        <dbReference type="SAM" id="MobiDB-lite"/>
    </source>
</evidence>
<evidence type="ECO:0000305" key="3"/>
<keyword id="KW-1185">Reference proteome</keyword>
<keyword id="KW-0687">Ribonucleoprotein</keyword>
<keyword id="KW-0689">Ribosomal protein</keyword>
<accession>Q313G2</accession>
<protein>
    <recommendedName>
        <fullName evidence="1">Small ribosomal subunit protein uS2</fullName>
    </recommendedName>
    <alternativeName>
        <fullName evidence="3">30S ribosomal protein S2</fullName>
    </alternativeName>
</protein>
<gene>
    <name evidence="1" type="primary">rpsB</name>
    <name type="ordered locus">Dde_1133</name>
</gene>
<organism>
    <name type="scientific">Oleidesulfovibrio alaskensis (strain ATCC BAA-1058 / DSM 17464 / G20)</name>
    <name type="common">Desulfovibrio alaskensis</name>
    <dbReference type="NCBI Taxonomy" id="207559"/>
    <lineage>
        <taxon>Bacteria</taxon>
        <taxon>Pseudomonadati</taxon>
        <taxon>Thermodesulfobacteriota</taxon>
        <taxon>Desulfovibrionia</taxon>
        <taxon>Desulfovibrionales</taxon>
        <taxon>Desulfovibrionaceae</taxon>
        <taxon>Oleidesulfovibrio</taxon>
    </lineage>
</organism>
<comment type="similarity">
    <text evidence="1">Belongs to the universal ribosomal protein uS2 family.</text>
</comment>
<sequence>MAYVTMKGMLETGVHFGHQTRRWNPKMGTYIFGARNGIHIIDLQQTVKLFRTAHDKVVDTVARGGKVIFIGTKRQAQEAVQTEAGRAGQYYVTNRWMGGTLTNFQTIRKSIDRLKKLEVMFEDGTVNRYQKKEVLRLRREMDKLNLVLGGIKDMENLPQLAFIIDPNREDIAVKECRRLGIPIVAVTDTNCDPDLIDYVIPGNDDAIRAIKLFVGHIADACLEGEAMRKETKAENAEEAMKQAAEAEAEAAAPAAEESAE</sequence>